<protein>
    <recommendedName>
        <fullName evidence="1">Ribosomal RNA large subunit methyltransferase H</fullName>
        <ecNumber evidence="1">2.1.1.177</ecNumber>
    </recommendedName>
    <alternativeName>
        <fullName evidence="1">23S rRNA (pseudouridine1915-N3)-methyltransferase</fullName>
    </alternativeName>
    <alternativeName>
        <fullName evidence="1">23S rRNA m3Psi1915 methyltransferase</fullName>
    </alternativeName>
    <alternativeName>
        <fullName evidence="1">rRNA (pseudouridine-N3-)-methyltransferase RlmH</fullName>
    </alternativeName>
</protein>
<reference key="1">
    <citation type="submission" date="2006-06" db="EMBL/GenBank/DDBJ databases">
        <title>Complete sequence of Pseudoalteromonas atlantica T6c.</title>
        <authorList>
            <consortium name="US DOE Joint Genome Institute"/>
            <person name="Copeland A."/>
            <person name="Lucas S."/>
            <person name="Lapidus A."/>
            <person name="Barry K."/>
            <person name="Detter J.C."/>
            <person name="Glavina del Rio T."/>
            <person name="Hammon N."/>
            <person name="Israni S."/>
            <person name="Dalin E."/>
            <person name="Tice H."/>
            <person name="Pitluck S."/>
            <person name="Saunders E."/>
            <person name="Brettin T."/>
            <person name="Bruce D."/>
            <person name="Han C."/>
            <person name="Tapia R."/>
            <person name="Gilna P."/>
            <person name="Schmutz J."/>
            <person name="Larimer F."/>
            <person name="Land M."/>
            <person name="Hauser L."/>
            <person name="Kyrpides N."/>
            <person name="Kim E."/>
            <person name="Karls A.C."/>
            <person name="Bartlett D."/>
            <person name="Higgins B.P."/>
            <person name="Richardson P."/>
        </authorList>
    </citation>
    <scope>NUCLEOTIDE SEQUENCE [LARGE SCALE GENOMIC DNA]</scope>
    <source>
        <strain>T6c / ATCC BAA-1087</strain>
    </source>
</reference>
<accession>Q15VK5</accession>
<feature type="chain" id="PRO_0000260584" description="Ribosomal RNA large subunit methyltransferase H">
    <location>
        <begin position="1"/>
        <end position="156"/>
    </location>
</feature>
<feature type="binding site" evidence="1">
    <location>
        <position position="73"/>
    </location>
    <ligand>
        <name>S-adenosyl-L-methionine</name>
        <dbReference type="ChEBI" id="CHEBI:59789"/>
    </ligand>
</feature>
<feature type="binding site" evidence="1">
    <location>
        <position position="104"/>
    </location>
    <ligand>
        <name>S-adenosyl-L-methionine</name>
        <dbReference type="ChEBI" id="CHEBI:59789"/>
    </ligand>
</feature>
<feature type="binding site" evidence="1">
    <location>
        <begin position="123"/>
        <end position="128"/>
    </location>
    <ligand>
        <name>S-adenosyl-L-methionine</name>
        <dbReference type="ChEBI" id="CHEBI:59789"/>
    </ligand>
</feature>
<organism>
    <name type="scientific">Pseudoalteromonas atlantica (strain T6c / ATCC BAA-1087)</name>
    <dbReference type="NCBI Taxonomy" id="3042615"/>
    <lineage>
        <taxon>Bacteria</taxon>
        <taxon>Pseudomonadati</taxon>
        <taxon>Pseudomonadota</taxon>
        <taxon>Gammaproteobacteria</taxon>
        <taxon>Alteromonadales</taxon>
        <taxon>Alteromonadaceae</taxon>
        <taxon>Paraglaciecola</taxon>
    </lineage>
</organism>
<name>RLMH_PSEA6</name>
<sequence length="156" mass="17512">MRIQLIAVGSKMPSWVEQGYQQYVKRFPSDMPLSLTEIPAGKRGKNADIKRILHKEGELTMAAIPKGNRIVTLEVTGKPWDTPMLASNMQKWQMDGRDVSLLIGGPEGLAPECIAASEQKWSLSPLTLPHPLVRIIVAESLYRAWSVNTNHPYHRE</sequence>
<keyword id="KW-0963">Cytoplasm</keyword>
<keyword id="KW-0489">Methyltransferase</keyword>
<keyword id="KW-0698">rRNA processing</keyword>
<keyword id="KW-0949">S-adenosyl-L-methionine</keyword>
<keyword id="KW-0808">Transferase</keyword>
<comment type="function">
    <text evidence="1">Specifically methylates the pseudouridine at position 1915 (m3Psi1915) in 23S rRNA.</text>
</comment>
<comment type="catalytic activity">
    <reaction evidence="1">
        <text>pseudouridine(1915) in 23S rRNA + S-adenosyl-L-methionine = N(3)-methylpseudouridine(1915) in 23S rRNA + S-adenosyl-L-homocysteine + H(+)</text>
        <dbReference type="Rhea" id="RHEA:42752"/>
        <dbReference type="Rhea" id="RHEA-COMP:10221"/>
        <dbReference type="Rhea" id="RHEA-COMP:10222"/>
        <dbReference type="ChEBI" id="CHEBI:15378"/>
        <dbReference type="ChEBI" id="CHEBI:57856"/>
        <dbReference type="ChEBI" id="CHEBI:59789"/>
        <dbReference type="ChEBI" id="CHEBI:65314"/>
        <dbReference type="ChEBI" id="CHEBI:74486"/>
        <dbReference type="EC" id="2.1.1.177"/>
    </reaction>
</comment>
<comment type="subunit">
    <text evidence="1">Homodimer.</text>
</comment>
<comment type="subcellular location">
    <subcellularLocation>
        <location evidence="1">Cytoplasm</location>
    </subcellularLocation>
</comment>
<comment type="similarity">
    <text evidence="1">Belongs to the RNA methyltransferase RlmH family.</text>
</comment>
<proteinExistence type="inferred from homology"/>
<gene>
    <name evidence="1" type="primary">rlmH</name>
    <name type="ordered locus">Patl_1561</name>
</gene>
<dbReference type="EC" id="2.1.1.177" evidence="1"/>
<dbReference type="EMBL" id="CP000388">
    <property type="protein sequence ID" value="ABG40083.1"/>
    <property type="molecule type" value="Genomic_DNA"/>
</dbReference>
<dbReference type="RefSeq" id="WP_011574398.1">
    <property type="nucleotide sequence ID" value="NC_008228.1"/>
</dbReference>
<dbReference type="SMR" id="Q15VK5"/>
<dbReference type="STRING" id="342610.Patl_1561"/>
<dbReference type="KEGG" id="pat:Patl_1561"/>
<dbReference type="eggNOG" id="COG1576">
    <property type="taxonomic scope" value="Bacteria"/>
</dbReference>
<dbReference type="HOGENOM" id="CLU_100552_1_0_6"/>
<dbReference type="OrthoDB" id="9806643at2"/>
<dbReference type="Proteomes" id="UP000001981">
    <property type="component" value="Chromosome"/>
</dbReference>
<dbReference type="GO" id="GO:0005737">
    <property type="term" value="C:cytoplasm"/>
    <property type="evidence" value="ECO:0007669"/>
    <property type="project" value="UniProtKB-SubCell"/>
</dbReference>
<dbReference type="GO" id="GO:0070038">
    <property type="term" value="F:rRNA (pseudouridine-N3-)-methyltransferase activity"/>
    <property type="evidence" value="ECO:0007669"/>
    <property type="project" value="UniProtKB-UniRule"/>
</dbReference>
<dbReference type="CDD" id="cd18081">
    <property type="entry name" value="RlmH-like"/>
    <property type="match status" value="1"/>
</dbReference>
<dbReference type="Gene3D" id="3.40.1280.10">
    <property type="match status" value="1"/>
</dbReference>
<dbReference type="HAMAP" id="MF_00658">
    <property type="entry name" value="23SrRNA_methyltr_H"/>
    <property type="match status" value="1"/>
</dbReference>
<dbReference type="InterPro" id="IPR029028">
    <property type="entry name" value="Alpha/beta_knot_MTases"/>
</dbReference>
<dbReference type="InterPro" id="IPR003742">
    <property type="entry name" value="RlmH-like"/>
</dbReference>
<dbReference type="InterPro" id="IPR029026">
    <property type="entry name" value="tRNA_m1G_MTases_N"/>
</dbReference>
<dbReference type="NCBIfam" id="NF000984">
    <property type="entry name" value="PRK00103.1-1"/>
    <property type="match status" value="1"/>
</dbReference>
<dbReference type="NCBIfam" id="NF000986">
    <property type="entry name" value="PRK00103.1-4"/>
    <property type="match status" value="1"/>
</dbReference>
<dbReference type="NCBIfam" id="TIGR00246">
    <property type="entry name" value="tRNA_RlmH_YbeA"/>
    <property type="match status" value="1"/>
</dbReference>
<dbReference type="PANTHER" id="PTHR33603">
    <property type="entry name" value="METHYLTRANSFERASE"/>
    <property type="match status" value="1"/>
</dbReference>
<dbReference type="PANTHER" id="PTHR33603:SF1">
    <property type="entry name" value="RIBOSOMAL RNA LARGE SUBUNIT METHYLTRANSFERASE H"/>
    <property type="match status" value="1"/>
</dbReference>
<dbReference type="Pfam" id="PF02590">
    <property type="entry name" value="SPOUT_MTase"/>
    <property type="match status" value="1"/>
</dbReference>
<dbReference type="PIRSF" id="PIRSF004505">
    <property type="entry name" value="MT_bac"/>
    <property type="match status" value="1"/>
</dbReference>
<dbReference type="SUPFAM" id="SSF75217">
    <property type="entry name" value="alpha/beta knot"/>
    <property type="match status" value="1"/>
</dbReference>
<evidence type="ECO:0000255" key="1">
    <source>
        <dbReference type="HAMAP-Rule" id="MF_00658"/>
    </source>
</evidence>